<feature type="chain" id="PRO_1000003251" description="Ribosome-recycling factor">
    <location>
        <begin position="1"/>
        <end position="187"/>
    </location>
</feature>
<gene>
    <name evidence="1" type="primary">frr</name>
    <name type="ordered locus">RD1_2586</name>
</gene>
<dbReference type="EMBL" id="CP000362">
    <property type="protein sequence ID" value="ABG32138.1"/>
    <property type="molecule type" value="Genomic_DNA"/>
</dbReference>
<dbReference type="RefSeq" id="WP_011568755.1">
    <property type="nucleotide sequence ID" value="NC_008209.1"/>
</dbReference>
<dbReference type="SMR" id="Q166F5"/>
<dbReference type="STRING" id="375451.RD1_2586"/>
<dbReference type="KEGG" id="rde:RD1_2586"/>
<dbReference type="eggNOG" id="COG0233">
    <property type="taxonomic scope" value="Bacteria"/>
</dbReference>
<dbReference type="HOGENOM" id="CLU_073981_2_0_5"/>
<dbReference type="OrthoDB" id="9804006at2"/>
<dbReference type="Proteomes" id="UP000007029">
    <property type="component" value="Chromosome"/>
</dbReference>
<dbReference type="GO" id="GO:0005829">
    <property type="term" value="C:cytosol"/>
    <property type="evidence" value="ECO:0007669"/>
    <property type="project" value="GOC"/>
</dbReference>
<dbReference type="GO" id="GO:0043023">
    <property type="term" value="F:ribosomal large subunit binding"/>
    <property type="evidence" value="ECO:0007669"/>
    <property type="project" value="TreeGrafter"/>
</dbReference>
<dbReference type="GO" id="GO:0002184">
    <property type="term" value="P:cytoplasmic translational termination"/>
    <property type="evidence" value="ECO:0007669"/>
    <property type="project" value="TreeGrafter"/>
</dbReference>
<dbReference type="CDD" id="cd00520">
    <property type="entry name" value="RRF"/>
    <property type="match status" value="1"/>
</dbReference>
<dbReference type="FunFam" id="1.10.132.20:FF:000001">
    <property type="entry name" value="Ribosome-recycling factor"/>
    <property type="match status" value="1"/>
</dbReference>
<dbReference type="FunFam" id="3.30.1360.40:FF:000001">
    <property type="entry name" value="Ribosome-recycling factor"/>
    <property type="match status" value="1"/>
</dbReference>
<dbReference type="Gene3D" id="3.30.1360.40">
    <property type="match status" value="1"/>
</dbReference>
<dbReference type="Gene3D" id="1.10.132.20">
    <property type="entry name" value="Ribosome-recycling factor"/>
    <property type="match status" value="1"/>
</dbReference>
<dbReference type="HAMAP" id="MF_00040">
    <property type="entry name" value="RRF"/>
    <property type="match status" value="1"/>
</dbReference>
<dbReference type="InterPro" id="IPR002661">
    <property type="entry name" value="Ribosome_recyc_fac"/>
</dbReference>
<dbReference type="InterPro" id="IPR023584">
    <property type="entry name" value="Ribosome_recyc_fac_dom"/>
</dbReference>
<dbReference type="InterPro" id="IPR036191">
    <property type="entry name" value="RRF_sf"/>
</dbReference>
<dbReference type="NCBIfam" id="TIGR00496">
    <property type="entry name" value="frr"/>
    <property type="match status" value="1"/>
</dbReference>
<dbReference type="PANTHER" id="PTHR20982:SF3">
    <property type="entry name" value="MITOCHONDRIAL RIBOSOME RECYCLING FACTOR PSEUDO 1"/>
    <property type="match status" value="1"/>
</dbReference>
<dbReference type="PANTHER" id="PTHR20982">
    <property type="entry name" value="RIBOSOME RECYCLING FACTOR"/>
    <property type="match status" value="1"/>
</dbReference>
<dbReference type="Pfam" id="PF01765">
    <property type="entry name" value="RRF"/>
    <property type="match status" value="1"/>
</dbReference>
<dbReference type="SUPFAM" id="SSF55194">
    <property type="entry name" value="Ribosome recycling factor, RRF"/>
    <property type="match status" value="1"/>
</dbReference>
<comment type="function">
    <text evidence="1">Responsible for the release of ribosomes from messenger RNA at the termination of protein biosynthesis. May increase the efficiency of translation by recycling ribosomes from one round of translation to another.</text>
</comment>
<comment type="subcellular location">
    <subcellularLocation>
        <location evidence="1">Cytoplasm</location>
    </subcellularLocation>
</comment>
<comment type="similarity">
    <text evidence="1">Belongs to the RRF family.</text>
</comment>
<keyword id="KW-0963">Cytoplasm</keyword>
<keyword id="KW-0648">Protein biosynthesis</keyword>
<keyword id="KW-1185">Reference proteome</keyword>
<evidence type="ECO:0000255" key="1">
    <source>
        <dbReference type="HAMAP-Rule" id="MF_00040"/>
    </source>
</evidence>
<organism>
    <name type="scientific">Roseobacter denitrificans (strain ATCC 33942 / OCh 114)</name>
    <name type="common">Erythrobacter sp. (strain OCh 114)</name>
    <name type="synonym">Roseobacter denitrificans</name>
    <dbReference type="NCBI Taxonomy" id="375451"/>
    <lineage>
        <taxon>Bacteria</taxon>
        <taxon>Pseudomonadati</taxon>
        <taxon>Pseudomonadota</taxon>
        <taxon>Alphaproteobacteria</taxon>
        <taxon>Rhodobacterales</taxon>
        <taxon>Roseobacteraceae</taxon>
        <taxon>Roseobacter</taxon>
    </lineage>
</organism>
<protein>
    <recommendedName>
        <fullName evidence="1">Ribosome-recycling factor</fullName>
        <shortName evidence="1">RRF</shortName>
    </recommendedName>
    <alternativeName>
        <fullName evidence="1">Ribosome-releasing factor</fullName>
    </alternativeName>
</protein>
<sequence length="187" mass="21000">MSEDFMLDTDDIERRMDGAISSLKTEFASLRTGRASASMLEPVMVDAYGQRTPINQVGTVNVPEPRMVTINVWDKGLVGKVEKAIRESGLGINPQLNGTIIMLPIPELNEERRRELSKVAGQYAEHARVSIRNIRRDGMDQIKKAKADGLSEDDQKLWEGEVQEITDRYIKGIDDQLATKQAEIMQV</sequence>
<name>RRF_ROSDO</name>
<reference key="1">
    <citation type="journal article" date="2007" name="J. Bacteriol.">
        <title>The complete genome sequence of Roseobacter denitrificans reveals a mixotrophic rather than photosynthetic metabolism.</title>
        <authorList>
            <person name="Swingley W.D."/>
            <person name="Sadekar S."/>
            <person name="Mastrian S.D."/>
            <person name="Matthies H.J."/>
            <person name="Hao J."/>
            <person name="Ramos H."/>
            <person name="Acharya C.R."/>
            <person name="Conrad A.L."/>
            <person name="Taylor H.L."/>
            <person name="Dejesa L.C."/>
            <person name="Shah M.K."/>
            <person name="O'Huallachain M.E."/>
            <person name="Lince M.T."/>
            <person name="Blankenship R.E."/>
            <person name="Beatty J.T."/>
            <person name="Touchman J.W."/>
        </authorList>
    </citation>
    <scope>NUCLEOTIDE SEQUENCE [LARGE SCALE GENOMIC DNA]</scope>
    <source>
        <strain>ATCC 33942 / OCh 114</strain>
    </source>
</reference>
<accession>Q166F5</accession>
<proteinExistence type="inferred from homology"/>